<accession>B0BWS2</accession>
<comment type="function">
    <text evidence="2">Cell wall formation.</text>
</comment>
<comment type="catalytic activity">
    <reaction evidence="2">
        <text>2 D-alanine + ATP = D-alanyl-D-alanine + ADP + phosphate + H(+)</text>
        <dbReference type="Rhea" id="RHEA:11224"/>
        <dbReference type="ChEBI" id="CHEBI:15378"/>
        <dbReference type="ChEBI" id="CHEBI:30616"/>
        <dbReference type="ChEBI" id="CHEBI:43474"/>
        <dbReference type="ChEBI" id="CHEBI:57416"/>
        <dbReference type="ChEBI" id="CHEBI:57822"/>
        <dbReference type="ChEBI" id="CHEBI:456216"/>
        <dbReference type="EC" id="6.3.2.4"/>
    </reaction>
</comment>
<comment type="cofactor">
    <cofactor evidence="1">
        <name>Mg(2+)</name>
        <dbReference type="ChEBI" id="CHEBI:18420"/>
    </cofactor>
    <cofactor evidence="1">
        <name>Mn(2+)</name>
        <dbReference type="ChEBI" id="CHEBI:29035"/>
    </cofactor>
    <text evidence="1">Binds 2 magnesium or manganese ions per subunit.</text>
</comment>
<comment type="pathway">
    <text evidence="2">Cell wall biogenesis; peptidoglycan biosynthesis.</text>
</comment>
<comment type="subcellular location">
    <subcellularLocation>
        <location evidence="2">Cytoplasm</location>
    </subcellularLocation>
</comment>
<comment type="similarity">
    <text evidence="2">Belongs to the D-alanine--D-alanine ligase family.</text>
</comment>
<gene>
    <name evidence="2" type="primary">ddl</name>
    <name type="ordered locus">RrIowa_0403</name>
</gene>
<protein>
    <recommendedName>
        <fullName evidence="2">D-alanine--D-alanine ligase</fullName>
        <ecNumber evidence="2">6.3.2.4</ecNumber>
    </recommendedName>
    <alternativeName>
        <fullName evidence="2">D-Ala-D-Ala ligase</fullName>
    </alternativeName>
    <alternativeName>
        <fullName evidence="2">D-alanylalanine synthetase</fullName>
    </alternativeName>
</protein>
<evidence type="ECO:0000250" key="1"/>
<evidence type="ECO:0000255" key="2">
    <source>
        <dbReference type="HAMAP-Rule" id="MF_00047"/>
    </source>
</evidence>
<feature type="chain" id="PRO_1000074782" description="D-alanine--D-alanine ligase">
    <location>
        <begin position="1"/>
        <end position="321"/>
    </location>
</feature>
<feature type="domain" description="ATP-grasp" evidence="2">
    <location>
        <begin position="121"/>
        <end position="315"/>
    </location>
</feature>
<feature type="binding site" evidence="2">
    <location>
        <begin position="147"/>
        <end position="199"/>
    </location>
    <ligand>
        <name>ATP</name>
        <dbReference type="ChEBI" id="CHEBI:30616"/>
    </ligand>
</feature>
<feature type="binding site" evidence="2">
    <location>
        <position position="268"/>
    </location>
    <ligand>
        <name>Mg(2+)</name>
        <dbReference type="ChEBI" id="CHEBI:18420"/>
        <label>1</label>
    </ligand>
</feature>
<feature type="binding site" evidence="2">
    <location>
        <position position="282"/>
    </location>
    <ligand>
        <name>Mg(2+)</name>
        <dbReference type="ChEBI" id="CHEBI:18420"/>
        <label>1</label>
    </ligand>
</feature>
<feature type="binding site" evidence="2">
    <location>
        <position position="282"/>
    </location>
    <ligand>
        <name>Mg(2+)</name>
        <dbReference type="ChEBI" id="CHEBI:18420"/>
        <label>2</label>
    </ligand>
</feature>
<feature type="binding site" evidence="2">
    <location>
        <position position="284"/>
    </location>
    <ligand>
        <name>Mg(2+)</name>
        <dbReference type="ChEBI" id="CHEBI:18420"/>
        <label>2</label>
    </ligand>
</feature>
<dbReference type="EC" id="6.3.2.4" evidence="2"/>
<dbReference type="EMBL" id="CP000766">
    <property type="protein sequence ID" value="ABY72298.1"/>
    <property type="molecule type" value="Genomic_DNA"/>
</dbReference>
<dbReference type="RefSeq" id="WP_012150548.1">
    <property type="nucleotide sequence ID" value="NC_010263.3"/>
</dbReference>
<dbReference type="SMR" id="B0BWS2"/>
<dbReference type="KEGG" id="rrj:RrIowa_0403"/>
<dbReference type="eggNOG" id="COG1181">
    <property type="taxonomic scope" value="Bacteria"/>
</dbReference>
<dbReference type="HOGENOM" id="CLU_039268_1_1_5"/>
<dbReference type="UniPathway" id="UPA00219"/>
<dbReference type="Proteomes" id="UP000000796">
    <property type="component" value="Chromosome"/>
</dbReference>
<dbReference type="GO" id="GO:0005737">
    <property type="term" value="C:cytoplasm"/>
    <property type="evidence" value="ECO:0007669"/>
    <property type="project" value="UniProtKB-SubCell"/>
</dbReference>
<dbReference type="GO" id="GO:0005524">
    <property type="term" value="F:ATP binding"/>
    <property type="evidence" value="ECO:0007669"/>
    <property type="project" value="UniProtKB-KW"/>
</dbReference>
<dbReference type="GO" id="GO:0008716">
    <property type="term" value="F:D-alanine-D-alanine ligase activity"/>
    <property type="evidence" value="ECO:0007669"/>
    <property type="project" value="UniProtKB-UniRule"/>
</dbReference>
<dbReference type="GO" id="GO:0046872">
    <property type="term" value="F:metal ion binding"/>
    <property type="evidence" value="ECO:0007669"/>
    <property type="project" value="UniProtKB-KW"/>
</dbReference>
<dbReference type="GO" id="GO:0071555">
    <property type="term" value="P:cell wall organization"/>
    <property type="evidence" value="ECO:0007669"/>
    <property type="project" value="UniProtKB-KW"/>
</dbReference>
<dbReference type="GO" id="GO:0009252">
    <property type="term" value="P:peptidoglycan biosynthetic process"/>
    <property type="evidence" value="ECO:0007669"/>
    <property type="project" value="UniProtKB-UniRule"/>
</dbReference>
<dbReference type="GO" id="GO:0008360">
    <property type="term" value="P:regulation of cell shape"/>
    <property type="evidence" value="ECO:0007669"/>
    <property type="project" value="UniProtKB-KW"/>
</dbReference>
<dbReference type="Gene3D" id="3.40.50.20">
    <property type="match status" value="1"/>
</dbReference>
<dbReference type="Gene3D" id="3.30.1490.20">
    <property type="entry name" value="ATP-grasp fold, A domain"/>
    <property type="match status" value="1"/>
</dbReference>
<dbReference type="Gene3D" id="3.30.470.20">
    <property type="entry name" value="ATP-grasp fold, B domain"/>
    <property type="match status" value="1"/>
</dbReference>
<dbReference type="HAMAP" id="MF_00047">
    <property type="entry name" value="Dala_Dala_lig"/>
    <property type="match status" value="1"/>
</dbReference>
<dbReference type="InterPro" id="IPR011761">
    <property type="entry name" value="ATP-grasp"/>
</dbReference>
<dbReference type="InterPro" id="IPR013815">
    <property type="entry name" value="ATP_grasp_subdomain_1"/>
</dbReference>
<dbReference type="InterPro" id="IPR000291">
    <property type="entry name" value="D-Ala_lig_Van_CS"/>
</dbReference>
<dbReference type="InterPro" id="IPR005905">
    <property type="entry name" value="D_ala_D_ala"/>
</dbReference>
<dbReference type="InterPro" id="IPR011095">
    <property type="entry name" value="Dala_Dala_lig_C"/>
</dbReference>
<dbReference type="InterPro" id="IPR011127">
    <property type="entry name" value="Dala_Dala_lig_N"/>
</dbReference>
<dbReference type="InterPro" id="IPR016185">
    <property type="entry name" value="PreATP-grasp_dom_sf"/>
</dbReference>
<dbReference type="NCBIfam" id="TIGR01205">
    <property type="entry name" value="D_ala_D_alaTIGR"/>
    <property type="match status" value="1"/>
</dbReference>
<dbReference type="NCBIfam" id="NF002378">
    <property type="entry name" value="PRK01372.1"/>
    <property type="match status" value="1"/>
</dbReference>
<dbReference type="PANTHER" id="PTHR23132">
    <property type="entry name" value="D-ALANINE--D-ALANINE LIGASE"/>
    <property type="match status" value="1"/>
</dbReference>
<dbReference type="PANTHER" id="PTHR23132:SF23">
    <property type="entry name" value="D-ALANINE--D-ALANINE LIGASE B"/>
    <property type="match status" value="1"/>
</dbReference>
<dbReference type="Pfam" id="PF07478">
    <property type="entry name" value="Dala_Dala_lig_C"/>
    <property type="match status" value="1"/>
</dbReference>
<dbReference type="Pfam" id="PF01820">
    <property type="entry name" value="Dala_Dala_lig_N"/>
    <property type="match status" value="1"/>
</dbReference>
<dbReference type="PIRSF" id="PIRSF039102">
    <property type="entry name" value="Ddl/VanB"/>
    <property type="match status" value="1"/>
</dbReference>
<dbReference type="SUPFAM" id="SSF56059">
    <property type="entry name" value="Glutathione synthetase ATP-binding domain-like"/>
    <property type="match status" value="1"/>
</dbReference>
<dbReference type="SUPFAM" id="SSF52440">
    <property type="entry name" value="PreATP-grasp domain"/>
    <property type="match status" value="1"/>
</dbReference>
<dbReference type="PROSITE" id="PS50975">
    <property type="entry name" value="ATP_GRASP"/>
    <property type="match status" value="1"/>
</dbReference>
<dbReference type="PROSITE" id="PS00843">
    <property type="entry name" value="DALA_DALA_LIGASE_1"/>
    <property type="match status" value="1"/>
</dbReference>
<dbReference type="PROSITE" id="PS00844">
    <property type="entry name" value="DALA_DALA_LIGASE_2"/>
    <property type="match status" value="1"/>
</dbReference>
<reference key="1">
    <citation type="journal article" date="2008" name="Infect. Immun.">
        <title>Genomic comparison of virulent Rickettsia rickettsii Sheila Smith and avirulent Rickettsia rickettsii Iowa.</title>
        <authorList>
            <person name="Ellison D.W."/>
            <person name="Clark T.R."/>
            <person name="Sturdevant D.E."/>
            <person name="Virtaneva K."/>
            <person name="Porcella S.F."/>
            <person name="Hackstadt T."/>
        </authorList>
    </citation>
    <scope>NUCLEOTIDE SEQUENCE [LARGE SCALE GENOMIC DNA]</scope>
    <source>
        <strain>Iowa</strain>
    </source>
</reference>
<organism>
    <name type="scientific">Rickettsia rickettsii (strain Iowa)</name>
    <dbReference type="NCBI Taxonomy" id="452659"/>
    <lineage>
        <taxon>Bacteria</taxon>
        <taxon>Pseudomonadati</taxon>
        <taxon>Pseudomonadota</taxon>
        <taxon>Alphaproteobacteria</taxon>
        <taxon>Rickettsiales</taxon>
        <taxon>Rickettsiaceae</taxon>
        <taxon>Rickettsieae</taxon>
        <taxon>Rickettsia</taxon>
        <taxon>spotted fever group</taxon>
    </lineage>
</organism>
<name>DDL_RICRO</name>
<proteinExistence type="inferred from homology"/>
<keyword id="KW-0067">ATP-binding</keyword>
<keyword id="KW-0133">Cell shape</keyword>
<keyword id="KW-0961">Cell wall biogenesis/degradation</keyword>
<keyword id="KW-0963">Cytoplasm</keyword>
<keyword id="KW-0436">Ligase</keyword>
<keyword id="KW-0460">Magnesium</keyword>
<keyword id="KW-0464">Manganese</keyword>
<keyword id="KW-0479">Metal-binding</keyword>
<keyword id="KW-0547">Nucleotide-binding</keyword>
<keyword id="KW-0573">Peptidoglycan synthesis</keyword>
<sequence>MHKYQTHWVEHSIVKILSSTGKKHIALMAGGMSAEREVSLVSSEGVSKALIELGYRVTFIDMGADIAVRLQEIKPDIVFNCLHGTYGEDGGLPGLLNIMRIPYTHSGVLSSALAFDKIHSRIWFLTNNINMAESIVVNKSDNIKNDPMKRPYVIKPLTQGSSIGVEVIFAEDDFNFADYDFPYGDQVIIEQYIKGRELQVAVLNGKALGALEIKLLKNRFYDYETKYTAGFADHLCPAPLPANLYEKLLIESEKIYKTMNCKGPARAEFILEEQTNKLYALEINTHPGMMSLSIVPEIAAYAGINFTNLIEEIIKTASFES</sequence>